<dbReference type="EC" id="3.1.4.17" evidence="3"/>
<dbReference type="EMBL" id="BA000019">
    <property type="protein sequence ID" value="BAB77037.1"/>
    <property type="molecule type" value="Genomic_DNA"/>
</dbReference>
<dbReference type="PIR" id="AB2473">
    <property type="entry name" value="AB2473"/>
</dbReference>
<dbReference type="SMR" id="Q8YLG0"/>
<dbReference type="STRING" id="103690.gene:10497400"/>
<dbReference type="DNASU" id="1108942"/>
<dbReference type="KEGG" id="ana:alr5338"/>
<dbReference type="eggNOG" id="COG1409">
    <property type="taxonomic scope" value="Bacteria"/>
</dbReference>
<dbReference type="OrthoDB" id="651281at2"/>
<dbReference type="Proteomes" id="UP000002483">
    <property type="component" value="Chromosome"/>
</dbReference>
<dbReference type="GO" id="GO:0004115">
    <property type="term" value="F:3',5'-cyclic-AMP phosphodiesterase activity"/>
    <property type="evidence" value="ECO:0007669"/>
    <property type="project" value="UniProtKB-EC"/>
</dbReference>
<dbReference type="GO" id="GO:0047555">
    <property type="term" value="F:3',5'-cyclic-GMP phosphodiesterase activity"/>
    <property type="evidence" value="ECO:0007669"/>
    <property type="project" value="RHEA"/>
</dbReference>
<dbReference type="GO" id="GO:0046872">
    <property type="term" value="F:metal ion binding"/>
    <property type="evidence" value="ECO:0007669"/>
    <property type="project" value="UniProtKB-KW"/>
</dbReference>
<dbReference type="GO" id="GO:0000166">
    <property type="term" value="F:nucleotide binding"/>
    <property type="evidence" value="ECO:0007669"/>
    <property type="project" value="UniProtKB-KW"/>
</dbReference>
<dbReference type="CDD" id="cd07402">
    <property type="entry name" value="MPP_GpdQ"/>
    <property type="match status" value="1"/>
</dbReference>
<dbReference type="Gene3D" id="3.60.21.10">
    <property type="match status" value="1"/>
</dbReference>
<dbReference type="InterPro" id="IPR004843">
    <property type="entry name" value="Calcineurin-like_PHP_ApaH"/>
</dbReference>
<dbReference type="InterPro" id="IPR050884">
    <property type="entry name" value="CNP_phosphodiesterase-III"/>
</dbReference>
<dbReference type="InterPro" id="IPR026575">
    <property type="entry name" value="GpdQ/CpdA-like"/>
</dbReference>
<dbReference type="InterPro" id="IPR029052">
    <property type="entry name" value="Metallo-depent_PP-like"/>
</dbReference>
<dbReference type="NCBIfam" id="NF008359">
    <property type="entry name" value="PRK11148.1"/>
    <property type="match status" value="1"/>
</dbReference>
<dbReference type="PANTHER" id="PTHR42988:SF2">
    <property type="entry name" value="CYCLIC NUCLEOTIDE PHOSPHODIESTERASE CBUA0032-RELATED"/>
    <property type="match status" value="1"/>
</dbReference>
<dbReference type="PANTHER" id="PTHR42988">
    <property type="entry name" value="PHOSPHOHYDROLASE"/>
    <property type="match status" value="1"/>
</dbReference>
<dbReference type="Pfam" id="PF00149">
    <property type="entry name" value="Metallophos"/>
    <property type="match status" value="1"/>
</dbReference>
<dbReference type="SUPFAM" id="SSF56300">
    <property type="entry name" value="Metallo-dependent phosphatases"/>
    <property type="match status" value="1"/>
</dbReference>
<keyword id="KW-0114">cAMP</keyword>
<keyword id="KW-0140">cGMP</keyword>
<keyword id="KW-0378">Hydrolase</keyword>
<keyword id="KW-0408">Iron</keyword>
<keyword id="KW-0479">Metal-binding</keyword>
<keyword id="KW-0547">Nucleotide-binding</keyword>
<keyword id="KW-1185">Reference proteome</keyword>
<comment type="function">
    <text evidence="3">Hydrolyzes cAMP to 5'-AMP. Plays an important regulatory role in modulating the intracellular concentration of cAMP, thereby influencing cAMP-dependent processes. Can also hydrolyze cGMP.</text>
</comment>
<comment type="catalytic activity">
    <reaction evidence="3">
        <text>a nucleoside 3',5'-cyclic phosphate + H2O = a nucleoside 5'-phosphate + H(+)</text>
        <dbReference type="Rhea" id="RHEA:14653"/>
        <dbReference type="ChEBI" id="CHEBI:15377"/>
        <dbReference type="ChEBI" id="CHEBI:15378"/>
        <dbReference type="ChEBI" id="CHEBI:57867"/>
        <dbReference type="ChEBI" id="CHEBI:58464"/>
        <dbReference type="EC" id="3.1.4.17"/>
    </reaction>
</comment>
<comment type="catalytic activity">
    <reaction evidence="3">
        <text>3',5'-cyclic AMP + H2O = AMP + H(+)</text>
        <dbReference type="Rhea" id="RHEA:25277"/>
        <dbReference type="ChEBI" id="CHEBI:15377"/>
        <dbReference type="ChEBI" id="CHEBI:15378"/>
        <dbReference type="ChEBI" id="CHEBI:58165"/>
        <dbReference type="ChEBI" id="CHEBI:456215"/>
    </reaction>
</comment>
<comment type="catalytic activity">
    <reaction evidence="3">
        <text>3',5'-cyclic GMP + H2O = GMP + H(+)</text>
        <dbReference type="Rhea" id="RHEA:16957"/>
        <dbReference type="ChEBI" id="CHEBI:15377"/>
        <dbReference type="ChEBI" id="CHEBI:15378"/>
        <dbReference type="ChEBI" id="CHEBI:57746"/>
        <dbReference type="ChEBI" id="CHEBI:58115"/>
    </reaction>
</comment>
<comment type="cofactor">
    <cofactor evidence="3">
        <name>Fe(2+)</name>
        <dbReference type="ChEBI" id="CHEBI:29033"/>
    </cofactor>
    <cofactor evidence="3">
        <name>Mn(2+)</name>
        <dbReference type="ChEBI" id="CHEBI:29035"/>
    </cofactor>
    <text evidence="2">Binds 2 Fe(2+) ions per subunit.</text>
</comment>
<comment type="activity regulation">
    <text evidence="3">Activated by iron and manganese.</text>
</comment>
<comment type="biophysicochemical properties">
    <kinetics>
        <KM evidence="3">45 uM for cAMP</KM>
        <Vmax evidence="3">4.9 umol/min/mg enzyme with cAMP as substrate</Vmax>
        <Vmax evidence="3">4.4 umol/min/mg enzyme with cGMP as substrate</Vmax>
    </kinetics>
</comment>
<comment type="similarity">
    <text evidence="4">Belongs to the cyclic nucleotide phosphodiesterase class-III family.</text>
</comment>
<protein>
    <recommendedName>
        <fullName evidence="4">3',5'-cyclic-nucleotide phosphodiesterase alr5338</fullName>
        <ecNumber evidence="3">3.1.4.17</ecNumber>
    </recommendedName>
</protein>
<feature type="chain" id="PRO_0000413371" description="3',5'-cyclic-nucleotide phosphodiesterase alr5338">
    <location>
        <begin position="1"/>
        <end position="266"/>
    </location>
</feature>
<feature type="binding site" evidence="2">
    <location>
        <position position="14"/>
    </location>
    <ligand>
        <name>Fe cation</name>
        <dbReference type="ChEBI" id="CHEBI:24875"/>
        <label>1</label>
    </ligand>
</feature>
<feature type="binding site" evidence="1">
    <location>
        <position position="16"/>
    </location>
    <ligand>
        <name>AMP</name>
        <dbReference type="ChEBI" id="CHEBI:456215"/>
    </ligand>
</feature>
<feature type="binding site" evidence="2">
    <location>
        <position position="16"/>
    </location>
    <ligand>
        <name>Fe cation</name>
        <dbReference type="ChEBI" id="CHEBI:24875"/>
        <label>1</label>
    </ligand>
</feature>
<feature type="binding site" evidence="1">
    <location>
        <position position="56"/>
    </location>
    <ligand>
        <name>AMP</name>
        <dbReference type="ChEBI" id="CHEBI:456215"/>
    </ligand>
</feature>
<feature type="binding site" evidence="2">
    <location>
        <position position="56"/>
    </location>
    <ligand>
        <name>Fe cation</name>
        <dbReference type="ChEBI" id="CHEBI:24875"/>
        <label>1</label>
    </ligand>
</feature>
<feature type="binding site" evidence="2">
    <location>
        <position position="56"/>
    </location>
    <ligand>
        <name>Fe cation</name>
        <dbReference type="ChEBI" id="CHEBI:24875"/>
        <label>2</label>
    </ligand>
</feature>
<feature type="binding site" evidence="1">
    <location>
        <begin position="86"/>
        <end position="87"/>
    </location>
    <ligand>
        <name>AMP</name>
        <dbReference type="ChEBI" id="CHEBI:456215"/>
    </ligand>
</feature>
<feature type="binding site" evidence="2">
    <location>
        <position position="86"/>
    </location>
    <ligand>
        <name>Fe cation</name>
        <dbReference type="ChEBI" id="CHEBI:24875"/>
        <label>2</label>
    </ligand>
</feature>
<feature type="binding site" evidence="2">
    <location>
        <position position="155"/>
    </location>
    <ligand>
        <name>Fe cation</name>
        <dbReference type="ChEBI" id="CHEBI:24875"/>
        <label>2</label>
    </ligand>
</feature>
<feature type="binding site" evidence="2">
    <location>
        <position position="194"/>
    </location>
    <ligand>
        <name>Fe cation</name>
        <dbReference type="ChEBI" id="CHEBI:24875"/>
        <label>2</label>
    </ligand>
</feature>
<feature type="binding site" evidence="1">
    <location>
        <position position="196"/>
    </location>
    <ligand>
        <name>AMP</name>
        <dbReference type="ChEBI" id="CHEBI:456215"/>
    </ligand>
</feature>
<feature type="binding site" evidence="2">
    <location>
        <position position="196"/>
    </location>
    <ligand>
        <name>Fe cation</name>
        <dbReference type="ChEBI" id="CHEBI:24875"/>
        <label>1</label>
    </ligand>
</feature>
<proteinExistence type="evidence at protein level"/>
<gene>
    <name type="ordered locus">alr5338</name>
</gene>
<evidence type="ECO:0000250" key="1">
    <source>
        <dbReference type="UniProtKB" id="P9WP65"/>
    </source>
</evidence>
<evidence type="ECO:0000250" key="2">
    <source>
        <dbReference type="UniProtKB" id="Q6XBH1"/>
    </source>
</evidence>
<evidence type="ECO:0000269" key="3">
    <source ref="2"/>
</evidence>
<evidence type="ECO:0000305" key="4"/>
<name>CNPD3_NOSS1</name>
<sequence>MNEKLPISIAQITDIHLLASESQRLQGISTTESFLAVMKRLEELRPELDLLLMTGDLSDDGTPESYENLQHYLNSLQIATYWLPGNHDCAIAMDKILNLGMVSRRKSFQRGNWNFILLNSSVTDCVYGYLSATTLDWLDSELKMLPNNPTLIALHHPPLSVNSAWIDRSCLQNSQELFAVIDRYPQVKLVLFGHIHQEFRRQRHNVHYLGSPSTCYQFQSQSTTFAINQELPGFRLLKLYADGTWTTKIERVPYSLPIEPTVTVSY</sequence>
<reference key="1">
    <citation type="journal article" date="2001" name="DNA Res.">
        <title>Complete genomic sequence of the filamentous nitrogen-fixing cyanobacterium Anabaena sp. strain PCC 7120.</title>
        <authorList>
            <person name="Kaneko T."/>
            <person name="Nakamura Y."/>
            <person name="Wolk C.P."/>
            <person name="Kuritz T."/>
            <person name="Sasamoto S."/>
            <person name="Watanabe A."/>
            <person name="Iriguchi M."/>
            <person name="Ishikawa A."/>
            <person name="Kawashima K."/>
            <person name="Kimura T."/>
            <person name="Kishida Y."/>
            <person name="Kohara M."/>
            <person name="Matsumoto M."/>
            <person name="Matsuno A."/>
            <person name="Muraki A."/>
            <person name="Nakazaki N."/>
            <person name="Shimpo S."/>
            <person name="Sugimoto M."/>
            <person name="Takazawa M."/>
            <person name="Yamada M."/>
            <person name="Yasuda M."/>
            <person name="Tabata S."/>
        </authorList>
    </citation>
    <scope>NUCLEOTIDE SEQUENCE [LARGE SCALE GENOMIC DNA]</scope>
    <source>
        <strain>PCC 7120 / SAG 25.82 / UTEX 2576</strain>
    </source>
</reference>
<reference key="2">
    <citation type="journal article" date="2005" name="Microbes Environ.">
        <title>Biochemical properties of a cAMP phosphodiesterase in the cyanobacterium Anabaena sp. strain PCC 7120.</title>
        <authorList>
            <person name="Fujisawa T."/>
            <person name="Ohmori M."/>
        </authorList>
    </citation>
    <scope>FUNCTION</scope>
    <scope>CATALYTIC ACTIVITY</scope>
    <scope>COFACTOR</scope>
    <scope>ACTIVITY REGULATION</scope>
    <scope>BIOPHYSICOCHEMICAL PROPERTIES</scope>
    <source>
        <strain>PCC 7120 / SAG 25.82 / UTEX 2576</strain>
    </source>
</reference>
<accession>Q8YLG0</accession>
<organism>
    <name type="scientific">Nostoc sp. (strain PCC 7120 / SAG 25.82 / UTEX 2576)</name>
    <dbReference type="NCBI Taxonomy" id="103690"/>
    <lineage>
        <taxon>Bacteria</taxon>
        <taxon>Bacillati</taxon>
        <taxon>Cyanobacteriota</taxon>
        <taxon>Cyanophyceae</taxon>
        <taxon>Nostocales</taxon>
        <taxon>Nostocaceae</taxon>
        <taxon>Nostoc</taxon>
    </lineage>
</organism>